<evidence type="ECO:0000255" key="1">
    <source>
        <dbReference type="HAMAP-Rule" id="MF_01307"/>
    </source>
</evidence>
<evidence type="ECO:0000305" key="2"/>
<organism>
    <name type="scientific">Staphylococcus aureus (strain JH1)</name>
    <dbReference type="NCBI Taxonomy" id="359787"/>
    <lineage>
        <taxon>Bacteria</taxon>
        <taxon>Bacillati</taxon>
        <taxon>Bacillota</taxon>
        <taxon>Bacilli</taxon>
        <taxon>Bacillales</taxon>
        <taxon>Staphylococcaceae</taxon>
        <taxon>Staphylococcus</taxon>
    </lineage>
</organism>
<reference key="1">
    <citation type="submission" date="2007-06" db="EMBL/GenBank/DDBJ databases">
        <title>Complete sequence of chromosome of Staphylococcus aureus subsp. aureus JH1.</title>
        <authorList>
            <consortium name="US DOE Joint Genome Institute"/>
            <person name="Copeland A."/>
            <person name="Lucas S."/>
            <person name="Lapidus A."/>
            <person name="Barry K."/>
            <person name="Detter J.C."/>
            <person name="Glavina del Rio T."/>
            <person name="Hammon N."/>
            <person name="Israni S."/>
            <person name="Dalin E."/>
            <person name="Tice H."/>
            <person name="Pitluck S."/>
            <person name="Chain P."/>
            <person name="Malfatti S."/>
            <person name="Shin M."/>
            <person name="Vergez L."/>
            <person name="Schmutz J."/>
            <person name="Larimer F."/>
            <person name="Land M."/>
            <person name="Hauser L."/>
            <person name="Kyrpides N."/>
            <person name="Ivanova N."/>
            <person name="Tomasz A."/>
            <person name="Richardson P."/>
        </authorList>
    </citation>
    <scope>NUCLEOTIDE SEQUENCE [LARGE SCALE GENOMIC DNA]</scope>
    <source>
        <strain>JH1</strain>
    </source>
</reference>
<proteinExistence type="inferred from homology"/>
<dbReference type="EMBL" id="CP000736">
    <property type="protein sequence ID" value="ABR53126.1"/>
    <property type="molecule type" value="Genomic_DNA"/>
</dbReference>
<dbReference type="SMR" id="A6U3V8"/>
<dbReference type="KEGG" id="sah:SaurJH1_2301"/>
<dbReference type="HOGENOM" id="CLU_065898_2_2_9"/>
<dbReference type="GO" id="GO:0015935">
    <property type="term" value="C:small ribosomal subunit"/>
    <property type="evidence" value="ECO:0007669"/>
    <property type="project" value="InterPro"/>
</dbReference>
<dbReference type="GO" id="GO:0019843">
    <property type="term" value="F:rRNA binding"/>
    <property type="evidence" value="ECO:0007669"/>
    <property type="project" value="UniProtKB-UniRule"/>
</dbReference>
<dbReference type="GO" id="GO:0003735">
    <property type="term" value="F:structural constituent of ribosome"/>
    <property type="evidence" value="ECO:0007669"/>
    <property type="project" value="InterPro"/>
</dbReference>
<dbReference type="GO" id="GO:0006412">
    <property type="term" value="P:translation"/>
    <property type="evidence" value="ECO:0007669"/>
    <property type="project" value="UniProtKB-UniRule"/>
</dbReference>
<dbReference type="FunFam" id="3.30.160.20:FF:000001">
    <property type="entry name" value="30S ribosomal protein S5"/>
    <property type="match status" value="1"/>
</dbReference>
<dbReference type="FunFam" id="3.30.230.10:FF:000002">
    <property type="entry name" value="30S ribosomal protein S5"/>
    <property type="match status" value="1"/>
</dbReference>
<dbReference type="Gene3D" id="3.30.160.20">
    <property type="match status" value="1"/>
</dbReference>
<dbReference type="Gene3D" id="3.30.230.10">
    <property type="match status" value="1"/>
</dbReference>
<dbReference type="HAMAP" id="MF_01307_B">
    <property type="entry name" value="Ribosomal_uS5_B"/>
    <property type="match status" value="1"/>
</dbReference>
<dbReference type="InterPro" id="IPR020568">
    <property type="entry name" value="Ribosomal_Su5_D2-typ_SF"/>
</dbReference>
<dbReference type="InterPro" id="IPR000851">
    <property type="entry name" value="Ribosomal_uS5"/>
</dbReference>
<dbReference type="InterPro" id="IPR005712">
    <property type="entry name" value="Ribosomal_uS5_bac-type"/>
</dbReference>
<dbReference type="InterPro" id="IPR005324">
    <property type="entry name" value="Ribosomal_uS5_C"/>
</dbReference>
<dbReference type="InterPro" id="IPR013810">
    <property type="entry name" value="Ribosomal_uS5_N"/>
</dbReference>
<dbReference type="InterPro" id="IPR018192">
    <property type="entry name" value="Ribosomal_uS5_N_CS"/>
</dbReference>
<dbReference type="InterPro" id="IPR014721">
    <property type="entry name" value="Ribsml_uS5_D2-typ_fold_subgr"/>
</dbReference>
<dbReference type="NCBIfam" id="TIGR01021">
    <property type="entry name" value="rpsE_bact"/>
    <property type="match status" value="1"/>
</dbReference>
<dbReference type="PANTHER" id="PTHR48277">
    <property type="entry name" value="MITOCHONDRIAL RIBOSOMAL PROTEIN S5"/>
    <property type="match status" value="1"/>
</dbReference>
<dbReference type="PANTHER" id="PTHR48277:SF1">
    <property type="entry name" value="MITOCHONDRIAL RIBOSOMAL PROTEIN S5"/>
    <property type="match status" value="1"/>
</dbReference>
<dbReference type="Pfam" id="PF00333">
    <property type="entry name" value="Ribosomal_S5"/>
    <property type="match status" value="1"/>
</dbReference>
<dbReference type="Pfam" id="PF03719">
    <property type="entry name" value="Ribosomal_S5_C"/>
    <property type="match status" value="1"/>
</dbReference>
<dbReference type="SUPFAM" id="SSF54768">
    <property type="entry name" value="dsRNA-binding domain-like"/>
    <property type="match status" value="1"/>
</dbReference>
<dbReference type="SUPFAM" id="SSF54211">
    <property type="entry name" value="Ribosomal protein S5 domain 2-like"/>
    <property type="match status" value="1"/>
</dbReference>
<dbReference type="PROSITE" id="PS00585">
    <property type="entry name" value="RIBOSOMAL_S5"/>
    <property type="match status" value="1"/>
</dbReference>
<dbReference type="PROSITE" id="PS50881">
    <property type="entry name" value="S5_DSRBD"/>
    <property type="match status" value="1"/>
</dbReference>
<protein>
    <recommendedName>
        <fullName evidence="1">Small ribosomal subunit protein uS5</fullName>
    </recommendedName>
    <alternativeName>
        <fullName evidence="2">30S ribosomal protein S5</fullName>
    </alternativeName>
</protein>
<keyword id="KW-0687">Ribonucleoprotein</keyword>
<keyword id="KW-0689">Ribosomal protein</keyword>
<keyword id="KW-0694">RNA-binding</keyword>
<keyword id="KW-0699">rRNA-binding</keyword>
<sequence length="166" mass="17742">MARREEETKEFEERVVTINRVAKVVKGGRRFRFTALVVVGDKNGRVGFGTGKAQEVPEAIKKAVEAAKKDLVVVPRVEGTTPHTITGRYGSGSVFMKPAAPGTGVIAGGPVRAVLELAGITDILSKSLGSNTPINMVRATIDGLQNLKNAEDVAKLRGKTVEELYN</sequence>
<feature type="chain" id="PRO_1000086061" description="Small ribosomal subunit protein uS5">
    <location>
        <begin position="1"/>
        <end position="166"/>
    </location>
</feature>
<feature type="domain" description="S5 DRBM" evidence="1">
    <location>
        <begin position="11"/>
        <end position="74"/>
    </location>
</feature>
<gene>
    <name evidence="1" type="primary">rpsE</name>
    <name type="ordered locus">SaurJH1_2301</name>
</gene>
<comment type="function">
    <text evidence="1">With S4 and S12 plays an important role in translational accuracy.</text>
</comment>
<comment type="function">
    <text evidence="1">Located at the back of the 30S subunit body where it stabilizes the conformation of the head with respect to the body.</text>
</comment>
<comment type="subunit">
    <text evidence="1">Part of the 30S ribosomal subunit. Contacts proteins S4 and S8.</text>
</comment>
<comment type="domain">
    <text>The N-terminal domain interacts with the head of the 30S subunit; the C-terminal domain interacts with the body and contacts protein S4. The interaction surface between S4 and S5 is involved in control of translational fidelity.</text>
</comment>
<comment type="similarity">
    <text evidence="1">Belongs to the universal ribosomal protein uS5 family.</text>
</comment>
<name>RS5_STAA2</name>
<accession>A6U3V8</accession>